<reference evidence="6" key="1">
    <citation type="submission" date="2006-03" db="EMBL/GenBank/DDBJ databases">
        <authorList>
            <consortium name="Sanger Xenopus tropicalis EST/cDNA project"/>
        </authorList>
    </citation>
    <scope>NUCLEOTIDE SEQUENCE [LARGE SCALE MRNA]</scope>
    <source>
        <tissue evidence="6">Gastrula</tissue>
    </source>
</reference>
<comment type="function">
    <text evidence="1">Probable transcription factor.</text>
</comment>
<comment type="subcellular location">
    <subcellularLocation>
        <location evidence="2 5">Nucleus</location>
    </subcellularLocation>
</comment>
<feature type="chain" id="PRO_0000258005" description="Forkhead box protein I1c">
    <location>
        <begin position="1"/>
        <end position="358"/>
    </location>
</feature>
<feature type="DNA-binding region" description="Fork-head" evidence="3">
    <location>
        <begin position="106"/>
        <end position="200"/>
    </location>
</feature>
<feature type="region of interest" description="Disordered" evidence="4">
    <location>
        <begin position="1"/>
        <end position="25"/>
    </location>
</feature>
<feature type="region of interest" description="Disordered" evidence="4">
    <location>
        <begin position="191"/>
        <end position="255"/>
    </location>
</feature>
<feature type="compositionally biased region" description="Polar residues" evidence="4">
    <location>
        <begin position="1"/>
        <end position="13"/>
    </location>
</feature>
<sequence length="358" mass="39479">MNSIHLPSHQRTSAPGLHQHRPKGAQEASEMAVYCDNFSMYHQQNLHSSQRAPNYGIGDYAPPTNPYLWLGGPGVSNSPSNSSSFCGTDLSWLSVASQEELLKVVRPPYSYSALIAMAIQNAPEKKLTLSQIYQYVADNFPFYKRSKAGWQNSIRHNLSLNDCFKKVPRDEDDPGKGNYWTLDPNCEKMFDNGNFRRKRKRRSDSSSAEAVTVKGEEGRPALGGKGGESPLMLTPSSPELEAASDGRKSTSPSGITSSPCLNNFFSSMTSLDTTSVNRQMSMGLVNELSQRNITGLGSFTSGSVAEPSVDLQDNSLHLNRPSYYSTLSSTHQNNQFNSHFYNTFSVNSLIYAREGSEV</sequence>
<proteinExistence type="evidence at transcript level"/>
<organism>
    <name type="scientific">Xenopus tropicalis</name>
    <name type="common">Western clawed frog</name>
    <name type="synonym">Silurana tropicalis</name>
    <dbReference type="NCBI Taxonomy" id="8364"/>
    <lineage>
        <taxon>Eukaryota</taxon>
        <taxon>Metazoa</taxon>
        <taxon>Chordata</taxon>
        <taxon>Craniata</taxon>
        <taxon>Vertebrata</taxon>
        <taxon>Euteleostomi</taxon>
        <taxon>Amphibia</taxon>
        <taxon>Batrachia</taxon>
        <taxon>Anura</taxon>
        <taxon>Pipoidea</taxon>
        <taxon>Pipidae</taxon>
        <taxon>Xenopodinae</taxon>
        <taxon>Xenopus</taxon>
        <taxon>Silurana</taxon>
    </lineage>
</organism>
<name>FXI1C_XENTR</name>
<gene>
    <name evidence="1" type="primary">foxi1c</name>
    <name type="ORF">TGas113f01.1</name>
</gene>
<evidence type="ECO:0000250" key="1">
    <source>
        <dbReference type="UniProtKB" id="Q8JIT5"/>
    </source>
</evidence>
<evidence type="ECO:0000255" key="2"/>
<evidence type="ECO:0000255" key="3">
    <source>
        <dbReference type="PROSITE-ProRule" id="PRU00089"/>
    </source>
</evidence>
<evidence type="ECO:0000256" key="4">
    <source>
        <dbReference type="SAM" id="MobiDB-lite"/>
    </source>
</evidence>
<evidence type="ECO:0000305" key="5"/>
<evidence type="ECO:0000312" key="6">
    <source>
        <dbReference type="EMBL" id="CAJ83910.1"/>
    </source>
</evidence>
<accession>Q28D67</accession>
<protein>
    <recommendedName>
        <fullName>Forkhead box protein I1c</fullName>
        <shortName>FoxI1c</shortName>
    </recommendedName>
</protein>
<dbReference type="EMBL" id="CR855676">
    <property type="protein sequence ID" value="CAJ83910.1"/>
    <property type="molecule type" value="mRNA"/>
</dbReference>
<dbReference type="RefSeq" id="NP_001016787.1">
    <property type="nucleotide sequence ID" value="NM_001016787.2"/>
</dbReference>
<dbReference type="SMR" id="Q28D67"/>
<dbReference type="PaxDb" id="8364-ENSXETP00000004119"/>
<dbReference type="GeneID" id="549541"/>
<dbReference type="KEGG" id="xtr:549541"/>
<dbReference type="AGR" id="Xenbase:XB-GENE-5996107"/>
<dbReference type="CTD" id="344167"/>
<dbReference type="Xenbase" id="XB-GENE-5996107">
    <property type="gene designation" value="foxi3"/>
</dbReference>
<dbReference type="eggNOG" id="KOG2294">
    <property type="taxonomic scope" value="Eukaryota"/>
</dbReference>
<dbReference type="InParanoid" id="Q28D67"/>
<dbReference type="OrthoDB" id="5402974at2759"/>
<dbReference type="Proteomes" id="UP000008143">
    <property type="component" value="Chromosome 1"/>
</dbReference>
<dbReference type="GO" id="GO:0005634">
    <property type="term" value="C:nucleus"/>
    <property type="evidence" value="ECO:0000250"/>
    <property type="project" value="UniProtKB"/>
</dbReference>
<dbReference type="GO" id="GO:0003700">
    <property type="term" value="F:DNA-binding transcription factor activity"/>
    <property type="evidence" value="ECO:0007669"/>
    <property type="project" value="InterPro"/>
</dbReference>
<dbReference type="GO" id="GO:0043565">
    <property type="term" value="F:sequence-specific DNA binding"/>
    <property type="evidence" value="ECO:0000250"/>
    <property type="project" value="UniProtKB"/>
</dbReference>
<dbReference type="GO" id="GO:0045893">
    <property type="term" value="P:positive regulation of DNA-templated transcription"/>
    <property type="evidence" value="ECO:0000250"/>
    <property type="project" value="UniProtKB"/>
</dbReference>
<dbReference type="FunFam" id="1.10.10.10:FF:000016">
    <property type="entry name" value="Forkhead box protein I1"/>
    <property type="match status" value="1"/>
</dbReference>
<dbReference type="Gene3D" id="1.10.10.10">
    <property type="entry name" value="Winged helix-like DNA-binding domain superfamily/Winged helix DNA-binding domain"/>
    <property type="match status" value="1"/>
</dbReference>
<dbReference type="InterPro" id="IPR001766">
    <property type="entry name" value="Fork_head_dom"/>
</dbReference>
<dbReference type="InterPro" id="IPR050211">
    <property type="entry name" value="FOX_domain-containing"/>
</dbReference>
<dbReference type="InterPro" id="IPR018122">
    <property type="entry name" value="TF_fork_head_CS_1"/>
</dbReference>
<dbReference type="InterPro" id="IPR030456">
    <property type="entry name" value="TF_fork_head_CS_2"/>
</dbReference>
<dbReference type="InterPro" id="IPR036388">
    <property type="entry name" value="WH-like_DNA-bd_sf"/>
</dbReference>
<dbReference type="InterPro" id="IPR036390">
    <property type="entry name" value="WH_DNA-bd_sf"/>
</dbReference>
<dbReference type="PANTHER" id="PTHR11829">
    <property type="entry name" value="FORKHEAD BOX PROTEIN"/>
    <property type="match status" value="1"/>
</dbReference>
<dbReference type="PANTHER" id="PTHR11829:SF310">
    <property type="entry name" value="FORKHEAD BOX PROTEIN I3"/>
    <property type="match status" value="1"/>
</dbReference>
<dbReference type="Pfam" id="PF00250">
    <property type="entry name" value="Forkhead"/>
    <property type="match status" value="1"/>
</dbReference>
<dbReference type="PRINTS" id="PR00053">
    <property type="entry name" value="FORKHEAD"/>
</dbReference>
<dbReference type="SMART" id="SM00339">
    <property type="entry name" value="FH"/>
    <property type="match status" value="1"/>
</dbReference>
<dbReference type="SUPFAM" id="SSF46785">
    <property type="entry name" value="Winged helix' DNA-binding domain"/>
    <property type="match status" value="1"/>
</dbReference>
<dbReference type="PROSITE" id="PS00657">
    <property type="entry name" value="FORK_HEAD_1"/>
    <property type="match status" value="1"/>
</dbReference>
<dbReference type="PROSITE" id="PS00658">
    <property type="entry name" value="FORK_HEAD_2"/>
    <property type="match status" value="1"/>
</dbReference>
<dbReference type="PROSITE" id="PS50039">
    <property type="entry name" value="FORK_HEAD_3"/>
    <property type="match status" value="1"/>
</dbReference>
<keyword id="KW-0238">DNA-binding</keyword>
<keyword id="KW-0539">Nucleus</keyword>
<keyword id="KW-1185">Reference proteome</keyword>
<keyword id="KW-0804">Transcription</keyword>
<keyword id="KW-0805">Transcription regulation</keyword>